<feature type="chain" id="PRO_0000046882" description="Regulatory protein MIG2">
    <location>
        <begin position="1"/>
        <end position="382"/>
    </location>
</feature>
<feature type="zinc finger region" description="C2H2-type 1" evidence="1">
    <location>
        <begin position="17"/>
        <end position="39"/>
    </location>
</feature>
<feature type="zinc finger region" description="C2H2-type 2" evidence="1">
    <location>
        <begin position="45"/>
        <end position="69"/>
    </location>
</feature>
<feature type="region of interest" description="Disordered" evidence="2">
    <location>
        <begin position="252"/>
        <end position="283"/>
    </location>
</feature>
<feature type="region of interest" description="Disordered" evidence="2">
    <location>
        <begin position="316"/>
        <end position="364"/>
    </location>
</feature>
<feature type="compositionally biased region" description="Low complexity" evidence="2">
    <location>
        <begin position="259"/>
        <end position="283"/>
    </location>
</feature>
<name>MIG2_YEAST</name>
<keyword id="KW-0119">Carbohydrate metabolism</keyword>
<keyword id="KW-0238">DNA-binding</keyword>
<keyword id="KW-0479">Metal-binding</keyword>
<keyword id="KW-0539">Nucleus</keyword>
<keyword id="KW-1185">Reference proteome</keyword>
<keyword id="KW-0677">Repeat</keyword>
<keyword id="KW-0678">Repressor</keyword>
<keyword id="KW-0804">Transcription</keyword>
<keyword id="KW-0805">Transcription regulation</keyword>
<keyword id="KW-0862">Zinc</keyword>
<keyword id="KW-0863">Zinc-finger</keyword>
<proteinExistence type="evidence at protein level"/>
<sequence length="382" mass="42048">MPKKQTNFPVDNENRPFRCDTCHRGFHRLEHKKRHLRTHTGEKPHHCAFPGCGKSFSRSDELKRHMRTHTGQSQRRLKKASVQKQEFLTVSGIPTIASGVMIHQPIPQVLPANMAINVQAVNGGNIIHAPNAVHPMVIPIMAQPAPIHASAASFQPATSPMPISTYTPVPSQSFTSFQSSIGSIQSNSDVSSIFSNMNVRVNTPRSVPNSPNDGYLHQQHIPQQYQHQTASPSVAKQQKTFAHSLASALSTLQKRTPVSAPSTTIESPSSPSDSSHTSASSSAISLPFSNAPSQLAVAKELESVYLDSNRYTTKTRRERAKFEIPEEQEEDTNNSSSGSNEEEHESLDHESSKSRKKLSGVKLPPVRNLLKQIDVFNGPKRV</sequence>
<comment type="function">
    <text>Involved in glucose repression of the SUC2 gene.</text>
</comment>
<comment type="subcellular location">
    <subcellularLocation>
        <location evidence="4">Nucleus</location>
    </subcellularLocation>
</comment>
<comment type="miscellaneous">
    <text evidence="3">Present with 504 molecules/cell in log phase SD medium.</text>
</comment>
<comment type="similarity">
    <text evidence="4">Belongs to the creA/MIG C2H2-type zinc-finger protein family.</text>
</comment>
<accession>P53035</accession>
<accession>D6VTU6</accession>
<accession>O11853</accession>
<accession>O11854</accession>
<dbReference type="EMBL" id="U54564">
    <property type="protein sequence ID" value="AAB37570.1"/>
    <property type="molecule type" value="Genomic_DNA"/>
</dbReference>
<dbReference type="EMBL" id="U33754">
    <property type="protein sequence ID" value="AAC49496.1"/>
    <property type="molecule type" value="Genomic_DNA"/>
</dbReference>
<dbReference type="EMBL" id="Z72731">
    <property type="protein sequence ID" value="CAA96923.2"/>
    <property type="molecule type" value="Genomic_DNA"/>
</dbReference>
<dbReference type="EMBL" id="Z72731">
    <property type="protein sequence ID" value="CAA96924.1"/>
    <property type="molecule type" value="Genomic_DNA"/>
</dbReference>
<dbReference type="EMBL" id="Z72730">
    <property type="protein sequence ID" value="CAA96921.1"/>
    <property type="molecule type" value="Genomic_DNA"/>
</dbReference>
<dbReference type="EMBL" id="Z72732">
    <property type="protein sequence ID" value="CAA96925.1"/>
    <property type="molecule type" value="Genomic_DNA"/>
</dbReference>
<dbReference type="EMBL" id="BK006941">
    <property type="protein sequence ID" value="DAA07907.1"/>
    <property type="molecule type" value="Genomic_DNA"/>
</dbReference>
<dbReference type="PIR" id="S71669">
    <property type="entry name" value="S71669"/>
</dbReference>
<dbReference type="RefSeq" id="NP_011306.1">
    <property type="nucleotide sequence ID" value="NM_001181074.1"/>
</dbReference>
<dbReference type="SMR" id="P53035"/>
<dbReference type="BioGRID" id="33047">
    <property type="interactions" value="111"/>
</dbReference>
<dbReference type="FunCoup" id="P53035">
    <property type="interactions" value="776"/>
</dbReference>
<dbReference type="IntAct" id="P53035">
    <property type="interactions" value="7"/>
</dbReference>
<dbReference type="STRING" id="4932.YGL209W"/>
<dbReference type="iPTMnet" id="P53035"/>
<dbReference type="PaxDb" id="4932-YGL209W"/>
<dbReference type="PeptideAtlas" id="P53035"/>
<dbReference type="EnsemblFungi" id="YGL209W_mRNA">
    <property type="protein sequence ID" value="YGL209W"/>
    <property type="gene ID" value="YGL209W"/>
</dbReference>
<dbReference type="GeneID" id="852663"/>
<dbReference type="KEGG" id="sce:YGL209W"/>
<dbReference type="AGR" id="SGD:S000003177"/>
<dbReference type="SGD" id="S000003177">
    <property type="gene designation" value="MIG2"/>
</dbReference>
<dbReference type="VEuPathDB" id="FungiDB:YGL209W"/>
<dbReference type="eggNOG" id="KOG1721">
    <property type="taxonomic scope" value="Eukaryota"/>
</dbReference>
<dbReference type="GeneTree" id="ENSGT00940000169836"/>
<dbReference type="HOGENOM" id="CLU_039422_0_0_1"/>
<dbReference type="InParanoid" id="P53035"/>
<dbReference type="OMA" id="HESLDHE"/>
<dbReference type="OrthoDB" id="654211at2759"/>
<dbReference type="BioCyc" id="YEAST:G3O-30686-MONOMER"/>
<dbReference type="BioGRID-ORCS" id="852663">
    <property type="hits" value="2 hits in 13 CRISPR screens"/>
</dbReference>
<dbReference type="PRO" id="PR:P53035"/>
<dbReference type="Proteomes" id="UP000002311">
    <property type="component" value="Chromosome VII"/>
</dbReference>
<dbReference type="RNAct" id="P53035">
    <property type="molecule type" value="protein"/>
</dbReference>
<dbReference type="GO" id="GO:0005737">
    <property type="term" value="C:cytoplasm"/>
    <property type="evidence" value="ECO:0000318"/>
    <property type="project" value="GO_Central"/>
</dbReference>
<dbReference type="GO" id="GO:0005739">
    <property type="term" value="C:mitochondrion"/>
    <property type="evidence" value="ECO:0000314"/>
    <property type="project" value="SGD"/>
</dbReference>
<dbReference type="GO" id="GO:0005634">
    <property type="term" value="C:nucleus"/>
    <property type="evidence" value="ECO:0000314"/>
    <property type="project" value="SGD"/>
</dbReference>
<dbReference type="GO" id="GO:0001227">
    <property type="term" value="F:DNA-binding transcription repressor activity, RNA polymerase II-specific"/>
    <property type="evidence" value="ECO:0000314"/>
    <property type="project" value="SGD"/>
</dbReference>
<dbReference type="GO" id="GO:0000978">
    <property type="term" value="F:RNA polymerase II cis-regulatory region sequence-specific DNA binding"/>
    <property type="evidence" value="ECO:0000314"/>
    <property type="project" value="SGD"/>
</dbReference>
<dbReference type="GO" id="GO:0008270">
    <property type="term" value="F:zinc ion binding"/>
    <property type="evidence" value="ECO:0007669"/>
    <property type="project" value="UniProtKB-KW"/>
</dbReference>
<dbReference type="GO" id="GO:0000122">
    <property type="term" value="P:negative regulation of transcription by RNA polymerase II"/>
    <property type="evidence" value="ECO:0000315"/>
    <property type="project" value="SGD"/>
</dbReference>
<dbReference type="GO" id="GO:1900436">
    <property type="term" value="P:positive regulation of filamentous growth of a population of unicellular organisms in response to starvation"/>
    <property type="evidence" value="ECO:0000316"/>
    <property type="project" value="SGD"/>
</dbReference>
<dbReference type="GO" id="GO:0045944">
    <property type="term" value="P:positive regulation of transcription by RNA polymerase II"/>
    <property type="evidence" value="ECO:0000315"/>
    <property type="project" value="SGD"/>
</dbReference>
<dbReference type="FunFam" id="3.30.160.60:FF:000007">
    <property type="entry name" value="Basic krueppel-like factor 3"/>
    <property type="match status" value="1"/>
</dbReference>
<dbReference type="Gene3D" id="3.30.160.60">
    <property type="entry name" value="Classic Zinc Finger"/>
    <property type="match status" value="2"/>
</dbReference>
<dbReference type="InterPro" id="IPR051007">
    <property type="entry name" value="creA/MIG_C2H2-ZnF"/>
</dbReference>
<dbReference type="InterPro" id="IPR036236">
    <property type="entry name" value="Znf_C2H2_sf"/>
</dbReference>
<dbReference type="InterPro" id="IPR013087">
    <property type="entry name" value="Znf_C2H2_type"/>
</dbReference>
<dbReference type="PANTHER" id="PTHR47428">
    <property type="entry name" value="REGULATORY PROTEIN MIG1-RELATED"/>
    <property type="match status" value="1"/>
</dbReference>
<dbReference type="PANTHER" id="PTHR47428:SF1">
    <property type="entry name" value="REGULATORY PROTEIN MIG1-RELATED"/>
    <property type="match status" value="1"/>
</dbReference>
<dbReference type="Pfam" id="PF00096">
    <property type="entry name" value="zf-C2H2"/>
    <property type="match status" value="1"/>
</dbReference>
<dbReference type="SMART" id="SM00355">
    <property type="entry name" value="ZnF_C2H2"/>
    <property type="match status" value="2"/>
</dbReference>
<dbReference type="SUPFAM" id="SSF57667">
    <property type="entry name" value="beta-beta-alpha zinc fingers"/>
    <property type="match status" value="1"/>
</dbReference>
<dbReference type="PROSITE" id="PS00028">
    <property type="entry name" value="ZINC_FINGER_C2H2_1"/>
    <property type="match status" value="2"/>
</dbReference>
<dbReference type="PROSITE" id="PS50157">
    <property type="entry name" value="ZINC_FINGER_C2H2_2"/>
    <property type="match status" value="2"/>
</dbReference>
<reference key="1">
    <citation type="journal article" date="1996" name="Mol. Cell. Biol.">
        <title>Two zinc-finger-containing repressors are responsible for glucose repression of SUC2 expression.</title>
        <authorList>
            <person name="Lutfiyya L.L."/>
            <person name="Johnston M."/>
        </authorList>
    </citation>
    <scope>NUCLEOTIDE SEQUENCE [GENOMIC DNA]</scope>
    <source>
        <strain>ATCC 204508 / S288c</strain>
    </source>
</reference>
<reference key="2">
    <citation type="journal article" date="1996" name="Yeast">
        <title>Lambda clone B22 contains a 7676 bp genomic fragment of Saccharomyces cerevisiae chromosome VII spanning the VAM7-SPM2 intergenic region and containing three novel transcribed open reading frames.</title>
        <authorList>
            <person name="Kail M."/>
            <person name="Juettner E."/>
            <person name="Vaux D."/>
        </authorList>
    </citation>
    <scope>NUCLEOTIDE SEQUENCE [GENOMIC DNA]</scope>
    <source>
        <strain>ATCC 204508 / S288c</strain>
    </source>
</reference>
<reference key="3">
    <citation type="journal article" date="1997" name="Yeast">
        <title>Analysis of 21.7 kb DNA sequence from the left arm of chromosome VII reveals 11 open reading frames: two correspond to new genes.</title>
        <authorList>
            <person name="Feuermann M."/>
            <person name="Simeonava L."/>
            <person name="Souciet J.-L."/>
            <person name="Potier S."/>
        </authorList>
    </citation>
    <scope>NUCLEOTIDE SEQUENCE [GENOMIC DNA]</scope>
</reference>
<reference key="4">
    <citation type="journal article" date="1997" name="Nature">
        <title>The nucleotide sequence of Saccharomyces cerevisiae chromosome VII.</title>
        <authorList>
            <person name="Tettelin H."/>
            <person name="Agostoni-Carbone M.L."/>
            <person name="Albermann K."/>
            <person name="Albers M."/>
            <person name="Arroyo J."/>
            <person name="Backes U."/>
            <person name="Barreiros T."/>
            <person name="Bertani I."/>
            <person name="Bjourson A.J."/>
            <person name="Brueckner M."/>
            <person name="Bruschi C.V."/>
            <person name="Carignani G."/>
            <person name="Castagnoli L."/>
            <person name="Cerdan E."/>
            <person name="Clemente M.L."/>
            <person name="Coblenz A."/>
            <person name="Coglievina M."/>
            <person name="Coissac E."/>
            <person name="Defoor E."/>
            <person name="Del Bino S."/>
            <person name="Delius H."/>
            <person name="Delneri D."/>
            <person name="de Wergifosse P."/>
            <person name="Dujon B."/>
            <person name="Durand P."/>
            <person name="Entian K.-D."/>
            <person name="Eraso P."/>
            <person name="Escribano V."/>
            <person name="Fabiani L."/>
            <person name="Fartmann B."/>
            <person name="Feroli F."/>
            <person name="Feuermann M."/>
            <person name="Frontali L."/>
            <person name="Garcia-Gonzalez M."/>
            <person name="Garcia-Saez M.I."/>
            <person name="Goffeau A."/>
            <person name="Guerreiro P."/>
            <person name="Hani J."/>
            <person name="Hansen M."/>
            <person name="Hebling U."/>
            <person name="Hernandez K."/>
            <person name="Heumann K."/>
            <person name="Hilger F."/>
            <person name="Hofmann B."/>
            <person name="Indge K.J."/>
            <person name="James C.M."/>
            <person name="Klima R."/>
            <person name="Koetter P."/>
            <person name="Kramer B."/>
            <person name="Kramer W."/>
            <person name="Lauquin G."/>
            <person name="Leuther H."/>
            <person name="Louis E.J."/>
            <person name="Maillier E."/>
            <person name="Marconi A."/>
            <person name="Martegani E."/>
            <person name="Mazon M.J."/>
            <person name="Mazzoni C."/>
            <person name="McReynolds A.D.K."/>
            <person name="Melchioretto P."/>
            <person name="Mewes H.-W."/>
            <person name="Minenkova O."/>
            <person name="Mueller-Auer S."/>
            <person name="Nawrocki A."/>
            <person name="Netter P."/>
            <person name="Neu R."/>
            <person name="Nombela C."/>
            <person name="Oliver S.G."/>
            <person name="Panzeri L."/>
            <person name="Paoluzi S."/>
            <person name="Plevani P."/>
            <person name="Portetelle D."/>
            <person name="Portillo F."/>
            <person name="Potier S."/>
            <person name="Purnelle B."/>
            <person name="Rieger M."/>
            <person name="Riles L."/>
            <person name="Rinaldi T."/>
            <person name="Robben J."/>
            <person name="Rodrigues-Pousada C."/>
            <person name="Rodriguez-Belmonte E."/>
            <person name="Rodriguez-Torres A.M."/>
            <person name="Rose M."/>
            <person name="Ruzzi M."/>
            <person name="Saliola M."/>
            <person name="Sanchez-Perez M."/>
            <person name="Schaefer B."/>
            <person name="Schaefer M."/>
            <person name="Scharfe M."/>
            <person name="Schmidheini T."/>
            <person name="Schreer A."/>
            <person name="Skala J."/>
            <person name="Souciet J.-L."/>
            <person name="Steensma H.Y."/>
            <person name="Talla E."/>
            <person name="Thierry A."/>
            <person name="Vandenbol M."/>
            <person name="van der Aart Q.J.M."/>
            <person name="Van Dyck L."/>
            <person name="Vanoni M."/>
            <person name="Verhasselt P."/>
            <person name="Voet M."/>
            <person name="Volckaert G."/>
            <person name="Wambutt R."/>
            <person name="Watson M.D."/>
            <person name="Weber N."/>
            <person name="Wedler E."/>
            <person name="Wedler H."/>
            <person name="Wipfli P."/>
            <person name="Wolf K."/>
            <person name="Wright L.F."/>
            <person name="Zaccaria P."/>
            <person name="Zimmermann M."/>
            <person name="Zollner A."/>
            <person name="Kleine K."/>
        </authorList>
    </citation>
    <scope>NUCLEOTIDE SEQUENCE [LARGE SCALE GENOMIC DNA]</scope>
    <source>
        <strain>ATCC 204508 / S288c</strain>
    </source>
</reference>
<reference key="5">
    <citation type="journal article" date="2014" name="G3 (Bethesda)">
        <title>The reference genome sequence of Saccharomyces cerevisiae: Then and now.</title>
        <authorList>
            <person name="Engel S.R."/>
            <person name="Dietrich F.S."/>
            <person name="Fisk D.G."/>
            <person name="Binkley G."/>
            <person name="Balakrishnan R."/>
            <person name="Costanzo M.C."/>
            <person name="Dwight S.S."/>
            <person name="Hitz B.C."/>
            <person name="Karra K."/>
            <person name="Nash R.S."/>
            <person name="Weng S."/>
            <person name="Wong E.D."/>
            <person name="Lloyd P."/>
            <person name="Skrzypek M.S."/>
            <person name="Miyasato S.R."/>
            <person name="Simison M."/>
            <person name="Cherry J.M."/>
        </authorList>
    </citation>
    <scope>GENOME REANNOTATION</scope>
    <source>
        <strain>ATCC 204508 / S288c</strain>
    </source>
</reference>
<reference key="6">
    <citation type="journal article" date="2003" name="Nature">
        <title>Global analysis of protein expression in yeast.</title>
        <authorList>
            <person name="Ghaemmaghami S."/>
            <person name="Huh W.-K."/>
            <person name="Bower K."/>
            <person name="Howson R.W."/>
            <person name="Belle A."/>
            <person name="Dephoure N."/>
            <person name="O'Shea E.K."/>
            <person name="Weissman J.S."/>
        </authorList>
    </citation>
    <scope>LEVEL OF PROTEIN EXPRESSION [LARGE SCALE ANALYSIS]</scope>
</reference>
<organism>
    <name type="scientific">Saccharomyces cerevisiae (strain ATCC 204508 / S288c)</name>
    <name type="common">Baker's yeast</name>
    <dbReference type="NCBI Taxonomy" id="559292"/>
    <lineage>
        <taxon>Eukaryota</taxon>
        <taxon>Fungi</taxon>
        <taxon>Dikarya</taxon>
        <taxon>Ascomycota</taxon>
        <taxon>Saccharomycotina</taxon>
        <taxon>Saccharomycetes</taxon>
        <taxon>Saccharomycetales</taxon>
        <taxon>Saccharomycetaceae</taxon>
        <taxon>Saccharomyces</taxon>
    </lineage>
</organism>
<gene>
    <name type="primary">MIG2</name>
    <name type="synonym">MLZ1</name>
    <name type="ordered locus">YGL209W</name>
</gene>
<protein>
    <recommendedName>
        <fullName>Regulatory protein MIG2</fullName>
    </recommendedName>
</protein>
<evidence type="ECO:0000255" key="1">
    <source>
        <dbReference type="PROSITE-ProRule" id="PRU00042"/>
    </source>
</evidence>
<evidence type="ECO:0000256" key="2">
    <source>
        <dbReference type="SAM" id="MobiDB-lite"/>
    </source>
</evidence>
<evidence type="ECO:0000269" key="3">
    <source>
    </source>
</evidence>
<evidence type="ECO:0000305" key="4"/>